<sequence>MNPNQKLFALSGVAIALSVLNLLIGISNVGLNVSLHLKGAGTKQEENLTCTTITQNNTTVVENTYVNNTTIITKEPEFRAPSYLLLNKSLCNVEGWVVVAKDNAIRFGESEQIIVTREPYVSCDPSGCKMYALHQGTTIRNKHSNGTIHDRTAFRGLISTHLGTPPTVSNSDFICVGWSSTSCHDGIGRMTICVQGNNDNATATVYYNRRLTTTIKTWARNILRTQESECVCHNGTCAVVMTDGSASSQAYTKVMYFHKGLVIKEEPLKGSAKHIEECSCYGHNQKITCVCRDNWQGANRPIIEIDMTTLEHTSRYVCTGVLTDTSRPGDKPSGDCSNPITGSPGAPGVKGFGFLNGDNTWLGRTISPRSRSGFEMLKIPNAGTDPNSKIVERQEIVDNNNWSGYSGSFIDYWDDGNECYNPCFYVELIRGRPEEAKYVWWTSNSLIALCGSPFPVGSGSFPDGAQIQYFS</sequence>
<reference key="1">
    <citation type="journal article" date="2006" name="Science">
        <title>Large-scale sequence analysis of avian influenza isolates.</title>
        <authorList>
            <person name="Obenauer J.C."/>
            <person name="Denson J."/>
            <person name="Mehta P.K."/>
            <person name="Su X."/>
            <person name="Mukatira S."/>
            <person name="Finkelstein D.B."/>
            <person name="Xu X."/>
            <person name="Wang J."/>
            <person name="Ma J."/>
            <person name="Fan Y."/>
            <person name="Rakestraw K.M."/>
            <person name="Webster R.G."/>
            <person name="Hoffmann E."/>
            <person name="Krauss S."/>
            <person name="Zheng J."/>
            <person name="Zhang Z."/>
            <person name="Naeve C.W."/>
        </authorList>
    </citation>
    <scope>NUCLEOTIDE SEQUENCE [GENOMIC RNA]</scope>
</reference>
<reference key="2">
    <citation type="journal article" date="2004" name="Virus Res.">
        <title>Assembly and budding of influenza virus.</title>
        <authorList>
            <person name="Nayak D.P."/>
            <person name="Hui E.K."/>
            <person name="Barman S."/>
        </authorList>
    </citation>
    <scope>REVIEW</scope>
</reference>
<reference key="3">
    <citation type="journal article" date="2005" name="N. Engl. J. Med.">
        <title>Neuraminidase inhibitors for influenza.</title>
        <authorList>
            <person name="Moscona A."/>
        </authorList>
    </citation>
    <scope>REVIEW</scope>
</reference>
<reference key="4">
    <citation type="journal article" date="2005" name="Biol. Pharm. Bull.">
        <title>Sialobiology of influenza: molecular mechanism of host range variation of influenza viruses.</title>
        <authorList>
            <person name="Suzuki Y."/>
        </authorList>
    </citation>
    <scope>REVIEW</scope>
</reference>
<organismHost>
    <name type="scientific">Aves</name>
    <dbReference type="NCBI Taxonomy" id="8782"/>
</organismHost>
<organismHost>
    <name type="scientific">Equus caballus</name>
    <name type="common">Horse</name>
    <dbReference type="NCBI Taxonomy" id="9796"/>
</organismHost>
<organismHost>
    <name type="scientific">Homo sapiens</name>
    <name type="common">Human</name>
    <dbReference type="NCBI Taxonomy" id="9606"/>
</organismHost>
<organismHost>
    <name type="scientific">Phocidae</name>
    <name type="common">true seals</name>
    <dbReference type="NCBI Taxonomy" id="9709"/>
</organismHost>
<name>NRAM_I85A3</name>
<accession>Q0A2R1</accession>
<comment type="function">
    <text evidence="1">Catalyzes the removal of terminal sialic acid residues from viral and cellular glycoconjugates. Cleaves off the terminal sialic acids on the glycosylated HA during virus budding to facilitate virus release. Additionally helps virus spread through the circulation by further removing sialic acids from the cell surface. These cleavages prevent self-aggregation and ensure the efficient spread of the progeny virus from cell to cell. Otherwise, infection would be limited to one round of replication. Described as a receptor-destroying enzyme because it cleaves a terminal sialic acid from the cellular receptors. May facilitate viral invasion of the upper airways by cleaving the sialic acid moieties on the mucin of the airway epithelial cells. Likely to plays a role in the budding process through its association with lipid rafts during intracellular transport. May additionally display a raft-association independent effect on budding. Plays a role in the determination of host range restriction on replication and virulence. Sialidase activity in late endosome/lysosome traffic seems to enhance virus replication.</text>
</comment>
<comment type="catalytic activity">
    <reaction evidence="1">
        <text>Hydrolysis of alpha-(2-&gt;3)-, alpha-(2-&gt;6)-, alpha-(2-&gt;8)- glycosidic linkages of terminal sialic acid residues in oligosaccharides, glycoproteins, glycolipids, colominic acid and synthetic substrates.</text>
        <dbReference type="EC" id="3.2.1.18"/>
    </reaction>
</comment>
<comment type="cofactor">
    <cofactor evidence="1">
        <name>Ca(2+)</name>
        <dbReference type="ChEBI" id="CHEBI:29108"/>
    </cofactor>
</comment>
<comment type="activity regulation">
    <text evidence="1">Inhibited by the neuraminidase inhibitors zanamivir (Relenza) and oseltamivir (Tamiflu). These drugs interfere with the release of progeny virus from infected cells and are effective against all influenza strains. Resistance to neuraminidase inhibitors is quite rare.</text>
</comment>
<comment type="subunit">
    <text evidence="1">Homotetramer.</text>
</comment>
<comment type="subcellular location">
    <subcellularLocation>
        <location evidence="1">Virion membrane</location>
    </subcellularLocation>
    <subcellularLocation>
        <location evidence="1">Host apical cell membrane</location>
        <topology evidence="1">Single-pass type II membrane protein</topology>
    </subcellularLocation>
    <text evidence="1">Preferentially accumulates at the apical plasma membrane in infected polarized epithelial cells, which is the virus assembly site. Uses lipid rafts for cell surface transport and apical sorting. In the virion, forms a mushroom-shaped spike on the surface of the membrane.</text>
</comment>
<comment type="domain">
    <text evidence="1">Intact N-terminus is essential for virion morphogenesis. Possesses two apical sorting signals, one in the ectodomain, which is likely to be a glycan, and the other in the transmembrane domain. The transmembrane domain also plays a role in lipid raft association.</text>
</comment>
<comment type="PTM">
    <text evidence="1">N-glycosylated.</text>
</comment>
<comment type="miscellaneous">
    <text>The influenza A genome consist of 8 RNA segments. Genetic variation of hemagglutinin and/or neuraminidase genes results in the emergence of new influenza strains. The mechanism of variation can be the result of point mutations or the result of genetic reassortment between segments of two different strains.</text>
</comment>
<comment type="similarity">
    <text evidence="1">Belongs to the glycosyl hydrolase 34 family.</text>
</comment>
<dbReference type="EC" id="3.2.1.18" evidence="1"/>
<dbReference type="EMBL" id="CY015021">
    <property type="protein sequence ID" value="ABI85021.1"/>
    <property type="molecule type" value="Genomic_RNA"/>
</dbReference>
<dbReference type="SMR" id="Q0A2R1"/>
<dbReference type="CAZy" id="GH34">
    <property type="family name" value="Glycoside Hydrolase Family 34"/>
</dbReference>
<dbReference type="GlyCosmos" id="Q0A2R1">
    <property type="glycosylation" value="11 sites, No reported glycans"/>
</dbReference>
<dbReference type="GO" id="GO:0020002">
    <property type="term" value="C:host cell plasma membrane"/>
    <property type="evidence" value="ECO:0007669"/>
    <property type="project" value="UniProtKB-SubCell"/>
</dbReference>
<dbReference type="GO" id="GO:0016020">
    <property type="term" value="C:membrane"/>
    <property type="evidence" value="ECO:0007669"/>
    <property type="project" value="UniProtKB-UniRule"/>
</dbReference>
<dbReference type="GO" id="GO:0055036">
    <property type="term" value="C:virion membrane"/>
    <property type="evidence" value="ECO:0007669"/>
    <property type="project" value="UniProtKB-SubCell"/>
</dbReference>
<dbReference type="GO" id="GO:0004308">
    <property type="term" value="F:exo-alpha-sialidase activity"/>
    <property type="evidence" value="ECO:0007669"/>
    <property type="project" value="UniProtKB-UniRule"/>
</dbReference>
<dbReference type="GO" id="GO:0046872">
    <property type="term" value="F:metal ion binding"/>
    <property type="evidence" value="ECO:0007669"/>
    <property type="project" value="UniProtKB-UniRule"/>
</dbReference>
<dbReference type="GO" id="GO:0005975">
    <property type="term" value="P:carbohydrate metabolic process"/>
    <property type="evidence" value="ECO:0007669"/>
    <property type="project" value="InterPro"/>
</dbReference>
<dbReference type="GO" id="GO:0046761">
    <property type="term" value="P:viral budding from plasma membrane"/>
    <property type="evidence" value="ECO:0007669"/>
    <property type="project" value="UniProtKB-UniRule"/>
</dbReference>
<dbReference type="Gene3D" id="2.120.10.10">
    <property type="match status" value="1"/>
</dbReference>
<dbReference type="HAMAP" id="MF_04071">
    <property type="entry name" value="INFV_NRAM"/>
    <property type="match status" value="1"/>
</dbReference>
<dbReference type="InterPro" id="IPR001860">
    <property type="entry name" value="Glyco_hydro_34"/>
</dbReference>
<dbReference type="InterPro" id="IPR036278">
    <property type="entry name" value="Sialidase_sf"/>
</dbReference>
<dbReference type="Pfam" id="PF00064">
    <property type="entry name" value="Neur"/>
    <property type="match status" value="1"/>
</dbReference>
<dbReference type="SUPFAM" id="SSF50939">
    <property type="entry name" value="Sialidases"/>
    <property type="match status" value="1"/>
</dbReference>
<proteinExistence type="inferred from homology"/>
<gene>
    <name evidence="1" type="primary">NA</name>
</gene>
<evidence type="ECO:0000255" key="1">
    <source>
        <dbReference type="HAMAP-Rule" id="MF_04071"/>
    </source>
</evidence>
<keyword id="KW-0106">Calcium</keyword>
<keyword id="KW-1015">Disulfide bond</keyword>
<keyword id="KW-0325">Glycoprotein</keyword>
<keyword id="KW-0326">Glycosidase</keyword>
<keyword id="KW-1032">Host cell membrane</keyword>
<keyword id="KW-1043">Host membrane</keyword>
<keyword id="KW-0378">Hydrolase</keyword>
<keyword id="KW-0472">Membrane</keyword>
<keyword id="KW-0479">Metal-binding</keyword>
<keyword id="KW-0735">Signal-anchor</keyword>
<keyword id="KW-0812">Transmembrane</keyword>
<keyword id="KW-1133">Transmembrane helix</keyword>
<keyword id="KW-0946">Virion</keyword>
<feature type="chain" id="PRO_0000280126" description="Neuraminidase">
    <location>
        <begin position="1"/>
        <end position="471"/>
    </location>
</feature>
<feature type="topological domain" description="Intravirion" evidence="1">
    <location>
        <begin position="1"/>
        <end position="6"/>
    </location>
</feature>
<feature type="transmembrane region" description="Helical" evidence="1">
    <location>
        <begin position="7"/>
        <end position="27"/>
    </location>
</feature>
<feature type="topological domain" description="Virion surface" evidence="1">
    <location>
        <begin position="28"/>
        <end position="471"/>
    </location>
</feature>
<feature type="region of interest" description="Involved in apical transport and lipid raft association" evidence="1">
    <location>
        <begin position="11"/>
        <end position="33"/>
    </location>
</feature>
<feature type="region of interest" description="Hypervariable stalk region" evidence="1">
    <location>
        <begin position="36"/>
        <end position="87"/>
    </location>
</feature>
<feature type="region of interest" description="Head of neuraminidase" evidence="1">
    <location>
        <begin position="90"/>
        <end position="471"/>
    </location>
</feature>
<feature type="active site" description="Proton donor/acceptor" evidence="1">
    <location>
        <position position="150"/>
    </location>
</feature>
<feature type="active site" description="Nucleophile" evidence="1">
    <location>
        <position position="405"/>
    </location>
</feature>
<feature type="binding site" evidence="1">
    <location>
        <position position="117"/>
    </location>
    <ligand>
        <name>substrate</name>
    </ligand>
</feature>
<feature type="binding site" evidence="1">
    <location>
        <position position="151"/>
    </location>
    <ligand>
        <name>substrate</name>
    </ligand>
</feature>
<feature type="binding site" evidence="1">
    <location>
        <begin position="276"/>
        <end position="277"/>
    </location>
    <ligand>
        <name>substrate</name>
    </ligand>
</feature>
<feature type="binding site" evidence="1">
    <location>
        <position position="292"/>
    </location>
    <ligand>
        <name>substrate</name>
    </ligand>
</feature>
<feature type="binding site" evidence="1">
    <location>
        <position position="293"/>
    </location>
    <ligand>
        <name>Ca(2+)</name>
        <dbReference type="ChEBI" id="CHEBI:29108"/>
    </ligand>
</feature>
<feature type="binding site" evidence="1">
    <location>
        <position position="297"/>
    </location>
    <ligand>
        <name>Ca(2+)</name>
        <dbReference type="ChEBI" id="CHEBI:29108"/>
    </ligand>
</feature>
<feature type="binding site" evidence="1">
    <location>
        <position position="324"/>
    </location>
    <ligand>
        <name>Ca(2+)</name>
        <dbReference type="ChEBI" id="CHEBI:29108"/>
    </ligand>
</feature>
<feature type="binding site" evidence="1">
    <location>
        <position position="371"/>
    </location>
    <ligand>
        <name>substrate</name>
    </ligand>
</feature>
<feature type="glycosylation site" description="N-linked (GlcNAc...) asparagine; by host" evidence="1">
    <location>
        <position position="32"/>
    </location>
</feature>
<feature type="glycosylation site" description="N-linked (GlcNAc...) asparagine; by host" evidence="1">
    <location>
        <position position="47"/>
    </location>
</feature>
<feature type="glycosylation site" description="N-linked (GlcNAc...) asparagine; by host" evidence="1">
    <location>
        <position position="56"/>
    </location>
</feature>
<feature type="glycosylation site" description="N-linked (GlcNAc...) asparagine; by host" evidence="1">
    <location>
        <position position="57"/>
    </location>
</feature>
<feature type="glycosylation site" description="N-linked (GlcNAc...) asparagine; by host" evidence="1">
    <location>
        <position position="67"/>
    </location>
</feature>
<feature type="glycosylation site" description="N-linked (GlcNAc...) asparagine; by host" evidence="1">
    <location>
        <position position="68"/>
    </location>
</feature>
<feature type="glycosylation site" description="N-linked (GlcNAc...) asparagine; by host" evidence="1">
    <location>
        <position position="87"/>
    </location>
</feature>
<feature type="glycosylation site" description="N-linked (GlcNAc...) asparagine; by host" evidence="1">
    <location>
        <position position="145"/>
    </location>
</feature>
<feature type="glycosylation site" description="N-linked (GlcNAc...) asparagine; by host" evidence="1">
    <location>
        <position position="200"/>
    </location>
</feature>
<feature type="glycosylation site" description="N-linked (GlcNAc...) asparagine; by host" evidence="1">
    <location>
        <position position="234"/>
    </location>
</feature>
<feature type="glycosylation site" description="N-linked (GlcNAc...) asparagine; by host" evidence="1">
    <location>
        <position position="401"/>
    </location>
</feature>
<feature type="disulfide bond" evidence="1">
    <location>
        <begin position="91"/>
        <end position="419"/>
    </location>
</feature>
<feature type="disulfide bond" evidence="1">
    <location>
        <begin position="123"/>
        <end position="128"/>
    </location>
</feature>
<feature type="disulfide bond" evidence="1">
    <location>
        <begin position="183"/>
        <end position="230"/>
    </location>
</feature>
<feature type="disulfide bond" evidence="1">
    <location>
        <begin position="232"/>
        <end position="237"/>
    </location>
</feature>
<feature type="disulfide bond" evidence="1">
    <location>
        <begin position="278"/>
        <end position="291"/>
    </location>
</feature>
<feature type="disulfide bond" evidence="1">
    <location>
        <begin position="280"/>
        <end position="289"/>
    </location>
</feature>
<feature type="disulfide bond" evidence="1">
    <location>
        <begin position="318"/>
        <end position="336"/>
    </location>
</feature>
<feature type="disulfide bond" evidence="1">
    <location>
        <begin position="423"/>
        <end position="450"/>
    </location>
</feature>
<protein>
    <recommendedName>
        <fullName evidence="1">Neuraminidase</fullName>
        <ecNumber evidence="1">3.2.1.18</ecNumber>
    </recommendedName>
</protein>
<organism>
    <name type="scientific">Influenza A virus (strain A/Chicken/Victoria/1/1985 H7N7)</name>
    <dbReference type="NCBI Taxonomy" id="402520"/>
    <lineage>
        <taxon>Viruses</taxon>
        <taxon>Riboviria</taxon>
        <taxon>Orthornavirae</taxon>
        <taxon>Negarnaviricota</taxon>
        <taxon>Polyploviricotina</taxon>
        <taxon>Insthoviricetes</taxon>
        <taxon>Articulavirales</taxon>
        <taxon>Orthomyxoviridae</taxon>
        <taxon>Alphainfluenzavirus</taxon>
        <taxon>Alphainfluenzavirus influenzae</taxon>
        <taxon>Influenza A virus</taxon>
    </lineage>
</organism>